<sequence length="548" mass="61619">MDSQRNLLVIALLFVSFMIWQAWEQDKNPQPQTQQTTQTTTTAAGSAADQGVPASGQGKLITVKTDVLDLTINTRGGDVEQALLPAYPKELGSSEPFQLLETTPQFIYQAQSGLTGRDGPDNPANGPRPLYNVEKDAFVLADGQNELQVPMTYTDAAGNTFTKTFVFKRGDYAVNVNYSVQNTGEKPLEISTFGQLKQSINLPPHRDTGSSNFALHTFRGAAYSTPDEKYEKYKFDTIADNENLNVSSKGGWVAMLQQYFATAWIPRNDGTNNFYTANLGNGIVAIGYKAQPVLVQPGQTGAMTSTLWVGPEIQDKMAAVAPHLDLTVDYGWLWFISQPLFKLLKWIHSFVGNWGFSIIIITFIVRGIMYPLTKAQYTSMAKMRMLQPKIQAMRERLGDDKQRQSQEMMALYKAEKVNPLGGCFPLIIQMPIFLALYYMLMGSIELRHAPFALWIHDLSAQDPYYILPILMGVTMFFIQKMSPTTVTDPMQQKIMTFMPVIFTVFFLWFPSGLVLYYIVSNLVTIIQQQLIYRGLEKRGLHSREKKNS</sequence>
<accession>A9MJT7</accession>
<dbReference type="EMBL" id="CP000880">
    <property type="protein sequence ID" value="ABX23598.1"/>
    <property type="molecule type" value="Genomic_DNA"/>
</dbReference>
<dbReference type="SMR" id="A9MJT7"/>
<dbReference type="STRING" id="41514.SARI_03804"/>
<dbReference type="KEGG" id="ses:SARI_03804"/>
<dbReference type="HOGENOM" id="CLU_016535_3_0_6"/>
<dbReference type="Proteomes" id="UP000002084">
    <property type="component" value="Chromosome"/>
</dbReference>
<dbReference type="GO" id="GO:0005886">
    <property type="term" value="C:plasma membrane"/>
    <property type="evidence" value="ECO:0007669"/>
    <property type="project" value="UniProtKB-SubCell"/>
</dbReference>
<dbReference type="GO" id="GO:0032977">
    <property type="term" value="F:membrane insertase activity"/>
    <property type="evidence" value="ECO:0007669"/>
    <property type="project" value="InterPro"/>
</dbReference>
<dbReference type="GO" id="GO:0051205">
    <property type="term" value="P:protein insertion into membrane"/>
    <property type="evidence" value="ECO:0007669"/>
    <property type="project" value="TreeGrafter"/>
</dbReference>
<dbReference type="GO" id="GO:0015031">
    <property type="term" value="P:protein transport"/>
    <property type="evidence" value="ECO:0007669"/>
    <property type="project" value="UniProtKB-KW"/>
</dbReference>
<dbReference type="CDD" id="cd20070">
    <property type="entry name" value="5TM_YidC_Alb3"/>
    <property type="match status" value="1"/>
</dbReference>
<dbReference type="CDD" id="cd19961">
    <property type="entry name" value="EcYidC-like_peri"/>
    <property type="match status" value="1"/>
</dbReference>
<dbReference type="FunFam" id="2.70.98.90:FF:000001">
    <property type="entry name" value="Membrane protein insertase YidC"/>
    <property type="match status" value="1"/>
</dbReference>
<dbReference type="Gene3D" id="2.70.98.90">
    <property type="match status" value="1"/>
</dbReference>
<dbReference type="HAMAP" id="MF_01810">
    <property type="entry name" value="YidC_type1"/>
    <property type="match status" value="1"/>
</dbReference>
<dbReference type="InterPro" id="IPR019998">
    <property type="entry name" value="Membr_insert_YidC"/>
</dbReference>
<dbReference type="InterPro" id="IPR028053">
    <property type="entry name" value="Membr_insert_YidC_N"/>
</dbReference>
<dbReference type="InterPro" id="IPR001708">
    <property type="entry name" value="YidC/ALB3/OXA1/COX18"/>
</dbReference>
<dbReference type="InterPro" id="IPR028055">
    <property type="entry name" value="YidC/Oxa/ALB_C"/>
</dbReference>
<dbReference type="InterPro" id="IPR047196">
    <property type="entry name" value="YidC_ALB_C"/>
</dbReference>
<dbReference type="InterPro" id="IPR038221">
    <property type="entry name" value="YidC_periplasmic_sf"/>
</dbReference>
<dbReference type="NCBIfam" id="NF002351">
    <property type="entry name" value="PRK01318.1-1"/>
    <property type="match status" value="1"/>
</dbReference>
<dbReference type="NCBIfam" id="NF002352">
    <property type="entry name" value="PRK01318.1-3"/>
    <property type="match status" value="1"/>
</dbReference>
<dbReference type="NCBIfam" id="TIGR03593">
    <property type="entry name" value="yidC_nterm"/>
    <property type="match status" value="1"/>
</dbReference>
<dbReference type="NCBIfam" id="TIGR03592">
    <property type="entry name" value="yidC_oxa1_cterm"/>
    <property type="match status" value="1"/>
</dbReference>
<dbReference type="PANTHER" id="PTHR12428:SF65">
    <property type="entry name" value="CYTOCHROME C OXIDASE ASSEMBLY PROTEIN COX18, MITOCHONDRIAL"/>
    <property type="match status" value="1"/>
</dbReference>
<dbReference type="PANTHER" id="PTHR12428">
    <property type="entry name" value="OXA1"/>
    <property type="match status" value="1"/>
</dbReference>
<dbReference type="Pfam" id="PF02096">
    <property type="entry name" value="60KD_IMP"/>
    <property type="match status" value="1"/>
</dbReference>
<dbReference type="Pfam" id="PF14849">
    <property type="entry name" value="YidC_periplas"/>
    <property type="match status" value="1"/>
</dbReference>
<dbReference type="PRINTS" id="PR00701">
    <property type="entry name" value="60KDINNERMP"/>
</dbReference>
<dbReference type="PRINTS" id="PR01900">
    <property type="entry name" value="YIDCPROTEIN"/>
</dbReference>
<proteinExistence type="inferred from homology"/>
<reference key="1">
    <citation type="submission" date="2007-11" db="EMBL/GenBank/DDBJ databases">
        <authorList>
            <consortium name="The Salmonella enterica serovar Arizonae Genome Sequencing Project"/>
            <person name="McClelland M."/>
            <person name="Sanderson E.K."/>
            <person name="Porwollik S."/>
            <person name="Spieth J."/>
            <person name="Clifton W.S."/>
            <person name="Fulton R."/>
            <person name="Chunyan W."/>
            <person name="Wollam A."/>
            <person name="Shah N."/>
            <person name="Pepin K."/>
            <person name="Bhonagiri V."/>
            <person name="Nash W."/>
            <person name="Johnson M."/>
            <person name="Thiruvilangam P."/>
            <person name="Wilson R."/>
        </authorList>
    </citation>
    <scope>NUCLEOTIDE SEQUENCE [LARGE SCALE GENOMIC DNA]</scope>
    <source>
        <strain>ATCC BAA-731 / CDC346-86 / RSK2980</strain>
    </source>
</reference>
<feature type="chain" id="PRO_1000088261" description="Membrane protein insertase YidC">
    <location>
        <begin position="1"/>
        <end position="548"/>
    </location>
</feature>
<feature type="transmembrane region" description="Helical" evidence="1">
    <location>
        <begin position="6"/>
        <end position="26"/>
    </location>
</feature>
<feature type="transmembrane region" description="Helical" evidence="1">
    <location>
        <begin position="350"/>
        <end position="370"/>
    </location>
</feature>
<feature type="transmembrane region" description="Helical" evidence="1">
    <location>
        <begin position="424"/>
        <end position="444"/>
    </location>
</feature>
<feature type="transmembrane region" description="Helical" evidence="1">
    <location>
        <begin position="458"/>
        <end position="478"/>
    </location>
</feature>
<feature type="transmembrane region" description="Helical" evidence="1">
    <location>
        <begin position="499"/>
        <end position="519"/>
    </location>
</feature>
<feature type="region of interest" description="Disordered" evidence="2">
    <location>
        <begin position="28"/>
        <end position="54"/>
    </location>
</feature>
<feature type="compositionally biased region" description="Low complexity" evidence="2">
    <location>
        <begin position="29"/>
        <end position="42"/>
    </location>
</feature>
<organism>
    <name type="scientific">Salmonella arizonae (strain ATCC BAA-731 / CDC346-86 / RSK2980)</name>
    <dbReference type="NCBI Taxonomy" id="41514"/>
    <lineage>
        <taxon>Bacteria</taxon>
        <taxon>Pseudomonadati</taxon>
        <taxon>Pseudomonadota</taxon>
        <taxon>Gammaproteobacteria</taxon>
        <taxon>Enterobacterales</taxon>
        <taxon>Enterobacteriaceae</taxon>
        <taxon>Salmonella</taxon>
    </lineage>
</organism>
<comment type="function">
    <text evidence="1">Required for the insertion and/or proper folding and/or complex formation of integral membrane proteins into the membrane. Involved in integration of membrane proteins that insert both dependently and independently of the Sec translocase complex, as well as at least some lipoproteins. Aids folding of multispanning membrane proteins.</text>
</comment>
<comment type="subunit">
    <text evidence="1">Interacts with the Sec translocase complex via SecD. Specifically interacts with transmembrane segments of nascent integral membrane proteins during membrane integration.</text>
</comment>
<comment type="subcellular location">
    <subcellularLocation>
        <location evidence="1">Cell inner membrane</location>
        <topology evidence="1">Multi-pass membrane protein</topology>
    </subcellularLocation>
</comment>
<comment type="similarity">
    <text evidence="1">Belongs to the OXA1/ALB3/YidC family. Type 1 subfamily.</text>
</comment>
<protein>
    <recommendedName>
        <fullName evidence="1">Membrane protein insertase YidC</fullName>
    </recommendedName>
    <alternativeName>
        <fullName evidence="1">Foldase YidC</fullName>
    </alternativeName>
    <alternativeName>
        <fullName evidence="1">Membrane integrase YidC</fullName>
    </alternativeName>
    <alternativeName>
        <fullName evidence="1">Membrane protein YidC</fullName>
    </alternativeName>
</protein>
<evidence type="ECO:0000255" key="1">
    <source>
        <dbReference type="HAMAP-Rule" id="MF_01810"/>
    </source>
</evidence>
<evidence type="ECO:0000256" key="2">
    <source>
        <dbReference type="SAM" id="MobiDB-lite"/>
    </source>
</evidence>
<name>YIDC_SALAR</name>
<gene>
    <name evidence="1" type="primary">yidC</name>
    <name type="ordered locus">SARI_03804</name>
</gene>
<keyword id="KW-0997">Cell inner membrane</keyword>
<keyword id="KW-1003">Cell membrane</keyword>
<keyword id="KW-0143">Chaperone</keyword>
<keyword id="KW-0472">Membrane</keyword>
<keyword id="KW-0653">Protein transport</keyword>
<keyword id="KW-1185">Reference proteome</keyword>
<keyword id="KW-0812">Transmembrane</keyword>
<keyword id="KW-1133">Transmembrane helix</keyword>
<keyword id="KW-0813">Transport</keyword>